<dbReference type="EMBL" id="U00090">
    <property type="protein sequence ID" value="AAB91712.1"/>
    <property type="molecule type" value="Genomic_DNA"/>
</dbReference>
<dbReference type="EMBL" id="U00090">
    <property type="protein sequence ID" value="AAB91784.1"/>
    <property type="molecule type" value="Genomic_DNA"/>
</dbReference>
<dbReference type="EMBL" id="U00090">
    <property type="protein sequence ID" value="AAB91844.1"/>
    <property type="molecule type" value="Genomic_DNA"/>
</dbReference>
<dbReference type="RefSeq" id="NP_443910.1">
    <property type="nucleotide sequence ID" value="NC_000914.2"/>
</dbReference>
<dbReference type="RefSeq" id="NP_443987.1">
    <property type="nucleotide sequence ID" value="NC_000914.2"/>
</dbReference>
<dbReference type="RefSeq" id="NP_444057.1">
    <property type="nucleotide sequence ID" value="NC_000914.2"/>
</dbReference>
<dbReference type="RefSeq" id="WP_010875204.1">
    <property type="nucleotide sequence ID" value="NC_000914.2"/>
</dbReference>
<dbReference type="RefSeq" id="YP_002822761.1">
    <property type="nucleotide sequence ID" value="NC_012586.1"/>
</dbReference>
<dbReference type="RefSeq" id="YP_002823007.1">
    <property type="nucleotide sequence ID" value="NC_012586.1"/>
</dbReference>
<dbReference type="SMR" id="P55500"/>
<dbReference type="KEGG" id="rhi:NGR_a01680"/>
<dbReference type="KEGG" id="rhi:NGR_a02380"/>
<dbReference type="KEGG" id="rhi:NGR_a03160"/>
<dbReference type="eggNOG" id="COG1484">
    <property type="taxonomic scope" value="Bacteria"/>
</dbReference>
<dbReference type="HOGENOM" id="CLU_062999_1_1_5"/>
<dbReference type="OrthoDB" id="8150723at2"/>
<dbReference type="Proteomes" id="UP000001054">
    <property type="component" value="Plasmid pNGR234a"/>
</dbReference>
<dbReference type="GO" id="GO:0005524">
    <property type="term" value="F:ATP binding"/>
    <property type="evidence" value="ECO:0007669"/>
    <property type="project" value="UniProtKB-KW"/>
</dbReference>
<dbReference type="GO" id="GO:0016887">
    <property type="term" value="F:ATP hydrolysis activity"/>
    <property type="evidence" value="ECO:0007669"/>
    <property type="project" value="InterPro"/>
</dbReference>
<dbReference type="GO" id="GO:0006260">
    <property type="term" value="P:DNA replication"/>
    <property type="evidence" value="ECO:0007669"/>
    <property type="project" value="TreeGrafter"/>
</dbReference>
<dbReference type="CDD" id="cd00009">
    <property type="entry name" value="AAA"/>
    <property type="match status" value="1"/>
</dbReference>
<dbReference type="Gene3D" id="3.40.50.300">
    <property type="entry name" value="P-loop containing nucleotide triphosphate hydrolases"/>
    <property type="match status" value="1"/>
</dbReference>
<dbReference type="InterPro" id="IPR003593">
    <property type="entry name" value="AAA+_ATPase"/>
</dbReference>
<dbReference type="InterPro" id="IPR028350">
    <property type="entry name" value="DNAC/IstB-like"/>
</dbReference>
<dbReference type="InterPro" id="IPR047661">
    <property type="entry name" value="IstB"/>
</dbReference>
<dbReference type="InterPro" id="IPR002611">
    <property type="entry name" value="IstB_ATP-bd"/>
</dbReference>
<dbReference type="InterPro" id="IPR027417">
    <property type="entry name" value="P-loop_NTPase"/>
</dbReference>
<dbReference type="NCBIfam" id="NF038214">
    <property type="entry name" value="IS21_help_AAA"/>
    <property type="match status" value="1"/>
</dbReference>
<dbReference type="NCBIfam" id="NF006038">
    <property type="entry name" value="PRK08181.1"/>
    <property type="match status" value="1"/>
</dbReference>
<dbReference type="PANTHER" id="PTHR30050:SF4">
    <property type="entry name" value="ATP-BINDING PROTEIN RV3427C IN INSERTION SEQUENCE-RELATED"/>
    <property type="match status" value="1"/>
</dbReference>
<dbReference type="PANTHER" id="PTHR30050">
    <property type="entry name" value="CHROMOSOMAL REPLICATION INITIATOR PROTEIN DNAA"/>
    <property type="match status" value="1"/>
</dbReference>
<dbReference type="Pfam" id="PF01695">
    <property type="entry name" value="IstB_IS21"/>
    <property type="match status" value="1"/>
</dbReference>
<dbReference type="PIRSF" id="PIRSF003073">
    <property type="entry name" value="DNAC_TnpB_IstB"/>
    <property type="match status" value="1"/>
</dbReference>
<dbReference type="SMART" id="SM00382">
    <property type="entry name" value="AAA"/>
    <property type="match status" value="1"/>
</dbReference>
<dbReference type="SUPFAM" id="SSF52540">
    <property type="entry name" value="P-loop containing nucleoside triphosphate hydrolases"/>
    <property type="match status" value="1"/>
</dbReference>
<protein>
    <recommendedName>
        <fullName>Putative insertion sequence ATP-binding protein y4iQ/y4nD/y4sD</fullName>
    </recommendedName>
</protein>
<accession>P55500</accession>
<comment type="similarity">
    <text evidence="3">Belongs to the IS21/IS1162 putative ATP-binding protein family.</text>
</comment>
<sequence>MKNVHNTIDEARLGIMLNDLRLPTIKTLWPQFAEQADREGWPAARFLSAIAEHELAERAHRRIERHLAEAHLPPGKTLESFAFDAVPMVSKAQVMAIAAGDSWLAKGANILLFGPPGGGKSHLAAAIGLALIENGWRVLFTRTTDLVQKLQVARRELQLESAIAKLDKFDLLILDDLAYVTKDQAETSVLFELISARYERRSIMITANQPFGEWNRVFPDPAMTLAAVDRLVHHATIFEMNVESYRRRSAMEAKRHRGRPAAFATTKSASLIVAERQSEHDETLASDNQHDTFMPTAT</sequence>
<gene>
    <name type="ordered locus">NGR_a03160</name>
    <name type="ORF">y4iQ</name>
</gene>
<gene>
    <name type="ordered locus">NGR_a02380</name>
    <name type="ORF">y4nD</name>
</gene>
<gene>
    <name type="ordered locus">NGR_a01680</name>
    <name type="ORF">y4sD</name>
</gene>
<keyword id="KW-0067">ATP-binding</keyword>
<keyword id="KW-0547">Nucleotide-binding</keyword>
<keyword id="KW-0614">Plasmid</keyword>
<keyword id="KW-1185">Reference proteome</keyword>
<keyword id="KW-0814">Transposable element</keyword>
<geneLocation type="plasmid">
    <name>sym pNGR234a</name>
</geneLocation>
<evidence type="ECO:0000255" key="1"/>
<evidence type="ECO:0000256" key="2">
    <source>
        <dbReference type="SAM" id="MobiDB-lite"/>
    </source>
</evidence>
<evidence type="ECO:0000305" key="3"/>
<proteinExistence type="inferred from homology"/>
<name>Y4IQ_SINFN</name>
<feature type="chain" id="PRO_0000075483" description="Putative insertion sequence ATP-binding protein y4iQ/y4nD/y4sD">
    <location>
        <begin position="1"/>
        <end position="298"/>
    </location>
</feature>
<feature type="region of interest" description="Disordered" evidence="2">
    <location>
        <begin position="276"/>
        <end position="298"/>
    </location>
</feature>
<feature type="binding site" evidence="1">
    <location>
        <begin position="114"/>
        <end position="121"/>
    </location>
    <ligand>
        <name>ATP</name>
        <dbReference type="ChEBI" id="CHEBI:30616"/>
    </ligand>
</feature>
<organism>
    <name type="scientific">Sinorhizobium fredii (strain NBRC 101917 / NGR234)</name>
    <dbReference type="NCBI Taxonomy" id="394"/>
    <lineage>
        <taxon>Bacteria</taxon>
        <taxon>Pseudomonadati</taxon>
        <taxon>Pseudomonadota</taxon>
        <taxon>Alphaproteobacteria</taxon>
        <taxon>Hyphomicrobiales</taxon>
        <taxon>Rhizobiaceae</taxon>
        <taxon>Sinorhizobium/Ensifer group</taxon>
        <taxon>Sinorhizobium</taxon>
    </lineage>
</organism>
<reference key="1">
    <citation type="journal article" date="1997" name="Nature">
        <title>Molecular basis of symbiosis between Rhizobium and legumes.</title>
        <authorList>
            <person name="Freiberg C.A."/>
            <person name="Fellay R."/>
            <person name="Bairoch A."/>
            <person name="Broughton W.J."/>
            <person name="Rosenthal A."/>
            <person name="Perret X."/>
        </authorList>
    </citation>
    <scope>NUCLEOTIDE SEQUENCE [LARGE SCALE GENOMIC DNA]</scope>
    <source>
        <strain>NBRC 101917 / NGR234</strain>
    </source>
</reference>
<reference key="2">
    <citation type="journal article" date="2009" name="Appl. Environ. Microbiol.">
        <title>Rhizobium sp. strain NGR234 possesses a remarkable number of secretion systems.</title>
        <authorList>
            <person name="Schmeisser C."/>
            <person name="Liesegang H."/>
            <person name="Krysciak D."/>
            <person name="Bakkou N."/>
            <person name="Le Quere A."/>
            <person name="Wollherr A."/>
            <person name="Heinemeyer I."/>
            <person name="Morgenstern B."/>
            <person name="Pommerening-Roeser A."/>
            <person name="Flores M."/>
            <person name="Palacios R."/>
            <person name="Brenner S."/>
            <person name="Gottschalk G."/>
            <person name="Schmitz R.A."/>
            <person name="Broughton W.J."/>
            <person name="Perret X."/>
            <person name="Strittmatter A.W."/>
            <person name="Streit W.R."/>
        </authorList>
    </citation>
    <scope>NUCLEOTIDE SEQUENCE [LARGE SCALE GENOMIC DNA]</scope>
    <source>
        <strain>NBRC 101917 / NGR234</strain>
    </source>
</reference>